<name>RL10_SHESW</name>
<reference key="1">
    <citation type="submission" date="2006-12" db="EMBL/GenBank/DDBJ databases">
        <title>Complete sequence of Shewanella sp. W3-18-1.</title>
        <authorList>
            <consortium name="US DOE Joint Genome Institute"/>
            <person name="Copeland A."/>
            <person name="Lucas S."/>
            <person name="Lapidus A."/>
            <person name="Barry K."/>
            <person name="Detter J.C."/>
            <person name="Glavina del Rio T."/>
            <person name="Hammon N."/>
            <person name="Israni S."/>
            <person name="Dalin E."/>
            <person name="Tice H."/>
            <person name="Pitluck S."/>
            <person name="Chain P."/>
            <person name="Malfatti S."/>
            <person name="Shin M."/>
            <person name="Vergez L."/>
            <person name="Schmutz J."/>
            <person name="Larimer F."/>
            <person name="Land M."/>
            <person name="Hauser L."/>
            <person name="Kyrpides N."/>
            <person name="Lykidis A."/>
            <person name="Tiedje J."/>
            <person name="Richardson P."/>
        </authorList>
    </citation>
    <scope>NUCLEOTIDE SEQUENCE [LARGE SCALE GENOMIC DNA]</scope>
    <source>
        <strain>W3-18-1</strain>
    </source>
</reference>
<evidence type="ECO:0000255" key="1">
    <source>
        <dbReference type="HAMAP-Rule" id="MF_00362"/>
    </source>
</evidence>
<evidence type="ECO:0000305" key="2"/>
<dbReference type="EMBL" id="CP000503">
    <property type="protein sequence ID" value="ABM23000.1"/>
    <property type="molecule type" value="Genomic_DNA"/>
</dbReference>
<dbReference type="RefSeq" id="WP_006083609.1">
    <property type="nucleotide sequence ID" value="NC_008750.1"/>
</dbReference>
<dbReference type="GeneID" id="67441751"/>
<dbReference type="KEGG" id="shw:Sputw3181_0147"/>
<dbReference type="HOGENOM" id="CLU_092227_0_2_6"/>
<dbReference type="Proteomes" id="UP000002597">
    <property type="component" value="Chromosome"/>
</dbReference>
<dbReference type="GO" id="GO:0015934">
    <property type="term" value="C:large ribosomal subunit"/>
    <property type="evidence" value="ECO:0007669"/>
    <property type="project" value="InterPro"/>
</dbReference>
<dbReference type="GO" id="GO:0070180">
    <property type="term" value="F:large ribosomal subunit rRNA binding"/>
    <property type="evidence" value="ECO:0007669"/>
    <property type="project" value="UniProtKB-UniRule"/>
</dbReference>
<dbReference type="GO" id="GO:0003735">
    <property type="term" value="F:structural constituent of ribosome"/>
    <property type="evidence" value="ECO:0007669"/>
    <property type="project" value="InterPro"/>
</dbReference>
<dbReference type="GO" id="GO:0006412">
    <property type="term" value="P:translation"/>
    <property type="evidence" value="ECO:0007669"/>
    <property type="project" value="UniProtKB-UniRule"/>
</dbReference>
<dbReference type="CDD" id="cd05797">
    <property type="entry name" value="Ribosomal_L10"/>
    <property type="match status" value="1"/>
</dbReference>
<dbReference type="FunFam" id="3.30.70.1730:FF:000001">
    <property type="entry name" value="50S ribosomal protein L10"/>
    <property type="match status" value="1"/>
</dbReference>
<dbReference type="Gene3D" id="3.30.70.1730">
    <property type="match status" value="1"/>
</dbReference>
<dbReference type="Gene3D" id="6.10.250.2350">
    <property type="match status" value="1"/>
</dbReference>
<dbReference type="HAMAP" id="MF_00362">
    <property type="entry name" value="Ribosomal_uL10"/>
    <property type="match status" value="1"/>
</dbReference>
<dbReference type="InterPro" id="IPR001790">
    <property type="entry name" value="Ribosomal_uL10"/>
</dbReference>
<dbReference type="InterPro" id="IPR043141">
    <property type="entry name" value="Ribosomal_uL10-like_sf"/>
</dbReference>
<dbReference type="InterPro" id="IPR022973">
    <property type="entry name" value="Ribosomal_uL10_bac"/>
</dbReference>
<dbReference type="InterPro" id="IPR047865">
    <property type="entry name" value="Ribosomal_uL10_bac_type"/>
</dbReference>
<dbReference type="InterPro" id="IPR002363">
    <property type="entry name" value="Ribosomal_uL10_CS_bac"/>
</dbReference>
<dbReference type="NCBIfam" id="NF000955">
    <property type="entry name" value="PRK00099.1-1"/>
    <property type="match status" value="1"/>
</dbReference>
<dbReference type="PANTHER" id="PTHR11560">
    <property type="entry name" value="39S RIBOSOMAL PROTEIN L10, MITOCHONDRIAL"/>
    <property type="match status" value="1"/>
</dbReference>
<dbReference type="Pfam" id="PF00466">
    <property type="entry name" value="Ribosomal_L10"/>
    <property type="match status" value="1"/>
</dbReference>
<dbReference type="SUPFAM" id="SSF160369">
    <property type="entry name" value="Ribosomal protein L10-like"/>
    <property type="match status" value="1"/>
</dbReference>
<dbReference type="PROSITE" id="PS01109">
    <property type="entry name" value="RIBOSOMAL_L10"/>
    <property type="match status" value="1"/>
</dbReference>
<proteinExistence type="inferred from homology"/>
<organism>
    <name type="scientific">Shewanella sp. (strain W3-18-1)</name>
    <dbReference type="NCBI Taxonomy" id="351745"/>
    <lineage>
        <taxon>Bacteria</taxon>
        <taxon>Pseudomonadati</taxon>
        <taxon>Pseudomonadota</taxon>
        <taxon>Gammaproteobacteria</taxon>
        <taxon>Alteromonadales</taxon>
        <taxon>Shewanellaceae</taxon>
        <taxon>Shewanella</taxon>
    </lineage>
</organism>
<protein>
    <recommendedName>
        <fullName evidence="1">Large ribosomal subunit protein uL10</fullName>
    </recommendedName>
    <alternativeName>
        <fullName evidence="2">50S ribosomal protein L10</fullName>
    </alternativeName>
</protein>
<sequence>MALRLEDKKAIVAEVNEAAKGALSAVAADSRGVTVGAMTGLRKKAREAGVYVRVVRNTLARRAVEGTAFECLAETFTGPTLIAFSLEHPGAAARLLKDFAKEQANFEVKGAAFEGNFIPAAEIDRLAKLPTYEEALAQLMMTMKEASAGKFVRTLAALRDQKQEAA</sequence>
<accession>A1REA5</accession>
<keyword id="KW-0687">Ribonucleoprotein</keyword>
<keyword id="KW-0689">Ribosomal protein</keyword>
<keyword id="KW-0694">RNA-binding</keyword>
<keyword id="KW-0699">rRNA-binding</keyword>
<gene>
    <name evidence="1" type="primary">rplJ</name>
    <name type="ordered locus">Sputw3181_0147</name>
</gene>
<feature type="chain" id="PRO_1000005597" description="Large ribosomal subunit protein uL10">
    <location>
        <begin position="1"/>
        <end position="166"/>
    </location>
</feature>
<comment type="function">
    <text evidence="1">Forms part of the ribosomal stalk, playing a central role in the interaction of the ribosome with GTP-bound translation factors.</text>
</comment>
<comment type="subunit">
    <text evidence="1">Part of the ribosomal stalk of the 50S ribosomal subunit. The N-terminus interacts with L11 and the large rRNA to form the base of the stalk. The C-terminus forms an elongated spine to which L12 dimers bind in a sequential fashion forming a multimeric L10(L12)X complex.</text>
</comment>
<comment type="similarity">
    <text evidence="1">Belongs to the universal ribosomal protein uL10 family.</text>
</comment>